<evidence type="ECO:0000250" key="1"/>
<evidence type="ECO:0000305" key="2"/>
<name>LEUD_MYCTO</name>
<keyword id="KW-0028">Amino-acid biosynthesis</keyword>
<keyword id="KW-0100">Branched-chain amino acid biosynthesis</keyword>
<keyword id="KW-0432">Leucine biosynthesis</keyword>
<keyword id="KW-0456">Lyase</keyword>
<keyword id="KW-1185">Reference proteome</keyword>
<proteinExistence type="inferred from homology"/>
<sequence length="198" mass="21780">MEAFHTHSGIGVPLRRSNVDTDQIIPAVFLKRVTRTGFEDGLFAGWRSDPAFVLNLSPFDRGSVLVAGPDFGTGSSREHAVWALMDYGFRVVISSRFGDIFRGNAGKAGLLAAEVAQDDVELLWKLIEQSPGLEITANLQDRIITAATVVLPFKIDDHSAWRLLEGLDDIALTLRKLDEIEAFEGACAYWKPRTLPAP</sequence>
<protein>
    <recommendedName>
        <fullName>3-isopropylmalate dehydratase small subunit</fullName>
        <ecNumber>4.2.1.33</ecNumber>
    </recommendedName>
    <alternativeName>
        <fullName>Alpha-IPM isomerase</fullName>
        <shortName>IPMI</shortName>
    </alternativeName>
    <alternativeName>
        <fullName>Isopropylmalate isomerase</fullName>
    </alternativeName>
</protein>
<organism>
    <name type="scientific">Mycobacterium tuberculosis (strain CDC 1551 / Oshkosh)</name>
    <dbReference type="NCBI Taxonomy" id="83331"/>
    <lineage>
        <taxon>Bacteria</taxon>
        <taxon>Bacillati</taxon>
        <taxon>Actinomycetota</taxon>
        <taxon>Actinomycetes</taxon>
        <taxon>Mycobacteriales</taxon>
        <taxon>Mycobacteriaceae</taxon>
        <taxon>Mycobacterium</taxon>
        <taxon>Mycobacterium tuberculosis complex</taxon>
    </lineage>
</organism>
<accession>P9WK94</accession>
<accession>L0TE54</accession>
<accession>O53236</accession>
<accession>P65277</accession>
<dbReference type="EC" id="4.2.1.33"/>
<dbReference type="EMBL" id="AE000516">
    <property type="protein sequence ID" value="AAK47394.1"/>
    <property type="molecule type" value="Genomic_DNA"/>
</dbReference>
<dbReference type="PIR" id="F70853">
    <property type="entry name" value="F70853"/>
</dbReference>
<dbReference type="RefSeq" id="WP_003415110.1">
    <property type="nucleotide sequence ID" value="NZ_KK341227.1"/>
</dbReference>
<dbReference type="SMR" id="P9WK94"/>
<dbReference type="GeneID" id="45426976"/>
<dbReference type="KEGG" id="mtc:MT3065"/>
<dbReference type="PATRIC" id="fig|83331.31.peg.3308"/>
<dbReference type="HOGENOM" id="CLU_081378_0_1_11"/>
<dbReference type="UniPathway" id="UPA00048">
    <property type="reaction ID" value="UER00071"/>
</dbReference>
<dbReference type="Proteomes" id="UP000001020">
    <property type="component" value="Chromosome"/>
</dbReference>
<dbReference type="GO" id="GO:0009316">
    <property type="term" value="C:3-isopropylmalate dehydratase complex"/>
    <property type="evidence" value="ECO:0007669"/>
    <property type="project" value="InterPro"/>
</dbReference>
<dbReference type="GO" id="GO:0003861">
    <property type="term" value="F:3-isopropylmalate dehydratase activity"/>
    <property type="evidence" value="ECO:0007669"/>
    <property type="project" value="UniProtKB-UniRule"/>
</dbReference>
<dbReference type="GO" id="GO:0009098">
    <property type="term" value="P:L-leucine biosynthetic process"/>
    <property type="evidence" value="ECO:0007669"/>
    <property type="project" value="UniProtKB-UniRule"/>
</dbReference>
<dbReference type="CDD" id="cd01577">
    <property type="entry name" value="IPMI_Swivel"/>
    <property type="match status" value="1"/>
</dbReference>
<dbReference type="FunFam" id="3.20.19.10:FF:000003">
    <property type="entry name" value="3-isopropylmalate dehydratase small subunit"/>
    <property type="match status" value="1"/>
</dbReference>
<dbReference type="Gene3D" id="3.20.19.10">
    <property type="entry name" value="Aconitase, domain 4"/>
    <property type="match status" value="1"/>
</dbReference>
<dbReference type="HAMAP" id="MF_01031">
    <property type="entry name" value="LeuD_type1"/>
    <property type="match status" value="1"/>
</dbReference>
<dbReference type="InterPro" id="IPR004431">
    <property type="entry name" value="3-IsopropMal_deHydase_ssu"/>
</dbReference>
<dbReference type="InterPro" id="IPR015928">
    <property type="entry name" value="Aconitase/3IPM_dehydase_swvl"/>
</dbReference>
<dbReference type="InterPro" id="IPR000573">
    <property type="entry name" value="AconitaseA/IPMdHydase_ssu_swvl"/>
</dbReference>
<dbReference type="InterPro" id="IPR033940">
    <property type="entry name" value="IPMI_Swivel"/>
</dbReference>
<dbReference type="InterPro" id="IPR050075">
    <property type="entry name" value="LeuD"/>
</dbReference>
<dbReference type="NCBIfam" id="TIGR00171">
    <property type="entry name" value="leuD"/>
    <property type="match status" value="1"/>
</dbReference>
<dbReference type="NCBIfam" id="NF002458">
    <property type="entry name" value="PRK01641.1"/>
    <property type="match status" value="1"/>
</dbReference>
<dbReference type="PANTHER" id="PTHR43345:SF5">
    <property type="entry name" value="3-ISOPROPYLMALATE DEHYDRATASE SMALL SUBUNIT"/>
    <property type="match status" value="1"/>
</dbReference>
<dbReference type="PANTHER" id="PTHR43345">
    <property type="entry name" value="3-ISOPROPYLMALATE DEHYDRATASE SMALL SUBUNIT 2-RELATED-RELATED"/>
    <property type="match status" value="1"/>
</dbReference>
<dbReference type="Pfam" id="PF00694">
    <property type="entry name" value="Aconitase_C"/>
    <property type="match status" value="1"/>
</dbReference>
<dbReference type="SUPFAM" id="SSF52016">
    <property type="entry name" value="LeuD/IlvD-like"/>
    <property type="match status" value="1"/>
</dbReference>
<gene>
    <name type="primary">leuD</name>
    <name type="ordered locus">MT3065</name>
</gene>
<comment type="function">
    <text evidence="1">Catalyzes the isomerization between 2-isopropylmalate and 3-isopropylmalate, via the formation of 2-isopropylmaleate.</text>
</comment>
<comment type="catalytic activity">
    <reaction>
        <text>(2R,3S)-3-isopropylmalate = (2S)-2-isopropylmalate</text>
        <dbReference type="Rhea" id="RHEA:32287"/>
        <dbReference type="ChEBI" id="CHEBI:1178"/>
        <dbReference type="ChEBI" id="CHEBI:35121"/>
        <dbReference type="EC" id="4.2.1.33"/>
    </reaction>
</comment>
<comment type="pathway">
    <text>Amino-acid biosynthesis; L-leucine biosynthesis; L-leucine from 3-methyl-2-oxobutanoate: step 2/4.</text>
</comment>
<comment type="subunit">
    <text evidence="1">Heterodimer of LeuC and LeuD.</text>
</comment>
<comment type="similarity">
    <text evidence="2">Belongs to the LeuD family. LeuD type 1 subfamily.</text>
</comment>
<feature type="chain" id="PRO_0000427693" description="3-isopropylmalate dehydratase small subunit">
    <location>
        <begin position="1"/>
        <end position="198"/>
    </location>
</feature>
<reference key="1">
    <citation type="journal article" date="2002" name="J. Bacteriol.">
        <title>Whole-genome comparison of Mycobacterium tuberculosis clinical and laboratory strains.</title>
        <authorList>
            <person name="Fleischmann R.D."/>
            <person name="Alland D."/>
            <person name="Eisen J.A."/>
            <person name="Carpenter L."/>
            <person name="White O."/>
            <person name="Peterson J.D."/>
            <person name="DeBoy R.T."/>
            <person name="Dodson R.J."/>
            <person name="Gwinn M.L."/>
            <person name="Haft D.H."/>
            <person name="Hickey E.K."/>
            <person name="Kolonay J.F."/>
            <person name="Nelson W.C."/>
            <person name="Umayam L.A."/>
            <person name="Ermolaeva M.D."/>
            <person name="Salzberg S.L."/>
            <person name="Delcher A."/>
            <person name="Utterback T.R."/>
            <person name="Weidman J.F."/>
            <person name="Khouri H.M."/>
            <person name="Gill J."/>
            <person name="Mikula A."/>
            <person name="Bishai W."/>
            <person name="Jacobs W.R. Jr."/>
            <person name="Venter J.C."/>
            <person name="Fraser C.M."/>
        </authorList>
    </citation>
    <scope>NUCLEOTIDE SEQUENCE [LARGE SCALE GENOMIC DNA]</scope>
    <source>
        <strain>CDC 1551 / Oshkosh</strain>
    </source>
</reference>